<dbReference type="SMR" id="P63290"/>
<dbReference type="Proteomes" id="UP000291000">
    <property type="component" value="Unassembled WGS sequence"/>
</dbReference>
<dbReference type="Proteomes" id="UP000694566">
    <property type="component" value="Unplaced"/>
</dbReference>
<dbReference type="GO" id="GO:0005576">
    <property type="term" value="C:extracellular region"/>
    <property type="evidence" value="ECO:0007669"/>
    <property type="project" value="UniProtKB-SubCell"/>
</dbReference>
<dbReference type="GO" id="GO:0043005">
    <property type="term" value="C:neuron projection"/>
    <property type="evidence" value="ECO:0007669"/>
    <property type="project" value="TreeGrafter"/>
</dbReference>
<dbReference type="GO" id="GO:0005184">
    <property type="term" value="F:neuropeptide hormone activity"/>
    <property type="evidence" value="ECO:0000250"/>
    <property type="project" value="UniProtKB"/>
</dbReference>
<dbReference type="GO" id="GO:0051428">
    <property type="term" value="F:peptide hormone receptor binding"/>
    <property type="evidence" value="ECO:0007669"/>
    <property type="project" value="TreeGrafter"/>
</dbReference>
<dbReference type="GO" id="GO:0031891">
    <property type="term" value="F:type 1 vasoactive intestinal polypeptide receptor binding"/>
    <property type="evidence" value="ECO:0000250"/>
    <property type="project" value="UniProtKB"/>
</dbReference>
<dbReference type="GO" id="GO:0007189">
    <property type="term" value="P:adenylate cyclase-activating G protein-coupled receptor signaling pathway"/>
    <property type="evidence" value="ECO:0000250"/>
    <property type="project" value="UniProtKB"/>
</dbReference>
<dbReference type="GO" id="GO:0048242">
    <property type="term" value="P:epinephrine secretion"/>
    <property type="evidence" value="ECO:0007669"/>
    <property type="project" value="TreeGrafter"/>
</dbReference>
<dbReference type="GO" id="GO:0048255">
    <property type="term" value="P:mRNA stabilization"/>
    <property type="evidence" value="ECO:0000250"/>
    <property type="project" value="AgBase"/>
</dbReference>
<dbReference type="GO" id="GO:0045732">
    <property type="term" value="P:positive regulation of protein catabolic process"/>
    <property type="evidence" value="ECO:0007669"/>
    <property type="project" value="UniProtKB-ARBA"/>
</dbReference>
<dbReference type="GO" id="GO:0070459">
    <property type="term" value="P:prolactin secretion"/>
    <property type="evidence" value="ECO:0000250"/>
    <property type="project" value="AgBase"/>
</dbReference>
<dbReference type="GO" id="GO:0032880">
    <property type="term" value="P:regulation of protein localization"/>
    <property type="evidence" value="ECO:0007669"/>
    <property type="project" value="UniProtKB-ARBA"/>
</dbReference>
<dbReference type="Gene3D" id="6.10.250.590">
    <property type="match status" value="1"/>
</dbReference>
<dbReference type="InterPro" id="IPR000532">
    <property type="entry name" value="Glucagon_GIP_secretin_VIP"/>
</dbReference>
<dbReference type="InterPro" id="IPR046963">
    <property type="entry name" value="VIP/GHRH-like"/>
</dbReference>
<dbReference type="PANTHER" id="PTHR11213">
    <property type="entry name" value="GLUCAGON-FAMILY NEUROPEPTIDE"/>
    <property type="match status" value="1"/>
</dbReference>
<dbReference type="PANTHER" id="PTHR11213:SF5">
    <property type="entry name" value="VIP PEPTIDES"/>
    <property type="match status" value="1"/>
</dbReference>
<dbReference type="Pfam" id="PF00123">
    <property type="entry name" value="Hormone_2"/>
    <property type="match status" value="1"/>
</dbReference>
<dbReference type="SMART" id="SM00070">
    <property type="entry name" value="GLUCA"/>
    <property type="match status" value="1"/>
</dbReference>
<dbReference type="PROSITE" id="PS00260">
    <property type="entry name" value="GLUCAGON"/>
    <property type="match status" value="1"/>
</dbReference>
<comment type="function">
    <molecule>Vasoactive intestinal peptide</molecule>
    <text evidence="1">VIP is a neuropeptide involved in a diverse array of physiological processes through activating the PACAP subfamily of class B1 G protein-coupled receptors: VIP receptor 1 (VPR1) and VIP receptor 2 (VPR2). Abundantly expressed throughout the CNS and peripheral nervous systems where they primarily exert neuroprotective and immune modulatory roles (By similarity). Also causes vasodilation, lowers arterial blood pressure, stimulates myocardial contractility, increases glycogenolysis and relaxes the smooth muscle of trachea, stomach and gall bladder (By similarity).</text>
</comment>
<comment type="subcellular location">
    <subcellularLocation>
        <location>Secreted</location>
    </subcellularLocation>
</comment>
<comment type="similarity">
    <text evidence="3">Belongs to the glucagon family.</text>
</comment>
<protein>
    <recommendedName>
        <fullName>Vasoactive intestinal peptide</fullName>
        <shortName>VIP</shortName>
    </recommendedName>
    <alternativeName>
        <fullName>Vasoactive intestinal polypeptide</fullName>
    </alternativeName>
</protein>
<evidence type="ECO:0000250" key="1">
    <source>
        <dbReference type="UniProtKB" id="P01282"/>
    </source>
</evidence>
<evidence type="ECO:0000269" key="2">
    <source>
    </source>
</evidence>
<evidence type="ECO:0000305" key="3"/>
<accession>P63290</accession>
<accession>P04565</accession>
<reference key="1">
    <citation type="journal article" date="1986" name="Peptides 7 Suppl.">
        <title>Purification and amino acid sequences of dog, goat and guinea pig VIPs.</title>
        <authorList>
            <person name="Eng J."/>
            <person name="Du B.-H."/>
            <person name="Raufman J.-P."/>
            <person name="Yalow R.S."/>
        </authorList>
    </citation>
    <scope>PROTEIN SEQUENCE</scope>
    <scope>AMIDATION AT ASN-28</scope>
</reference>
<organism>
    <name type="scientific">Capra hircus</name>
    <name type="common">Goat</name>
    <dbReference type="NCBI Taxonomy" id="9925"/>
    <lineage>
        <taxon>Eukaryota</taxon>
        <taxon>Metazoa</taxon>
        <taxon>Chordata</taxon>
        <taxon>Craniata</taxon>
        <taxon>Vertebrata</taxon>
        <taxon>Euteleostomi</taxon>
        <taxon>Mammalia</taxon>
        <taxon>Eutheria</taxon>
        <taxon>Laurasiatheria</taxon>
        <taxon>Artiodactyla</taxon>
        <taxon>Ruminantia</taxon>
        <taxon>Pecora</taxon>
        <taxon>Bovidae</taxon>
        <taxon>Caprinae</taxon>
        <taxon>Capra</taxon>
    </lineage>
</organism>
<name>VIP_CAPHI</name>
<feature type="peptide" id="PRO_0000043940" description="Vasoactive intestinal peptide">
    <location>
        <begin position="1"/>
        <end position="28"/>
    </location>
</feature>
<feature type="modified residue" description="Asparagine amide" evidence="2">
    <location>
        <position position="28"/>
    </location>
</feature>
<gene>
    <name type="primary">VIP</name>
</gene>
<sequence>HSDAVFTDNYTRLRKQMAVKKYLNSILN</sequence>
<keyword id="KW-0027">Amidation</keyword>
<keyword id="KW-0903">Direct protein sequencing</keyword>
<keyword id="KW-0372">Hormone</keyword>
<keyword id="KW-1185">Reference proteome</keyword>
<keyword id="KW-0964">Secreted</keyword>
<proteinExistence type="evidence at protein level"/>